<organism>
    <name type="scientific">Homo sapiens</name>
    <name type="common">Human</name>
    <dbReference type="NCBI Taxonomy" id="9606"/>
    <lineage>
        <taxon>Eukaryota</taxon>
        <taxon>Metazoa</taxon>
        <taxon>Chordata</taxon>
        <taxon>Craniata</taxon>
        <taxon>Vertebrata</taxon>
        <taxon>Euteleostomi</taxon>
        <taxon>Mammalia</taxon>
        <taxon>Eutheria</taxon>
        <taxon>Euarchontoglires</taxon>
        <taxon>Primates</taxon>
        <taxon>Haplorrhini</taxon>
        <taxon>Catarrhini</taxon>
        <taxon>Hominidae</taxon>
        <taxon>Homo</taxon>
    </lineage>
</organism>
<proteinExistence type="uncertain"/>
<sequence length="122" mass="13375">MAPLQLLHPWGRRGAWASQHSLLSQEAMGPGEGAEPTPWGYLRAEHWGASPSGAPTLPFAPDECSLTPGSPPHPLNKQKHHPPHPSQTQKDLVPRSPQLEKSRIRLRRTLRNLGGGRGQRGQ</sequence>
<evidence type="ECO:0000256" key="1">
    <source>
        <dbReference type="SAM" id="MobiDB-lite"/>
    </source>
</evidence>
<evidence type="ECO:0000305" key="2"/>
<name>TLXNB_HUMAN</name>
<protein>
    <recommendedName>
        <fullName>Putative TLX1 neighbor protein</fullName>
    </recommendedName>
    <alternativeName>
        <fullName>TLX1 divergent gene protein</fullName>
    </alternativeName>
</protein>
<keyword id="KW-1185">Reference proteome</keyword>
<dbReference type="EMBL" id="AL133215">
    <property type="status" value="NOT_ANNOTATED_CDS"/>
    <property type="molecule type" value="Genomic_DNA"/>
</dbReference>
<dbReference type="EMBL" id="BC019674">
    <property type="status" value="NOT_ANNOTATED_CDS"/>
    <property type="molecule type" value="mRNA"/>
</dbReference>
<dbReference type="SMR" id="P0CAT3"/>
<dbReference type="GlyGen" id="P0CAT3">
    <property type="glycosylation" value="1 site"/>
</dbReference>
<dbReference type="BioMuta" id="HGNC:37183"/>
<dbReference type="PaxDb" id="9606-ENSP00000475001"/>
<dbReference type="UCSC" id="uc001ksv.4">
    <property type="organism name" value="human"/>
</dbReference>
<dbReference type="AGR" id="HGNC:37183"/>
<dbReference type="GeneCards" id="TLX1NB"/>
<dbReference type="HGNC" id="HGNC:37183">
    <property type="gene designation" value="TLX1NB"/>
</dbReference>
<dbReference type="MIM" id="612734">
    <property type="type" value="gene"/>
</dbReference>
<dbReference type="neXtProt" id="NX_P0CAT3"/>
<dbReference type="PharmGKB" id="PA165549107"/>
<dbReference type="eggNOG" id="ENOG502R9W5">
    <property type="taxonomic scope" value="Eukaryota"/>
</dbReference>
<dbReference type="InParanoid" id="P0CAT3"/>
<dbReference type="PAN-GO" id="P0CAT3">
    <property type="GO annotations" value="0 GO annotations based on evolutionary models"/>
</dbReference>
<dbReference type="ChiTaRS" id="TLX1NB">
    <property type="organism name" value="human"/>
</dbReference>
<dbReference type="Pharos" id="P0CAT3">
    <property type="development level" value="Tdark"/>
</dbReference>
<dbReference type="Proteomes" id="UP000005640">
    <property type="component" value="Unplaced"/>
</dbReference>
<dbReference type="RNAct" id="P0CAT3">
    <property type="molecule type" value="protein"/>
</dbReference>
<comment type="miscellaneous">
    <text>Oriented in a head-to-head manner with TLX1/HOX11. Both genes share the same promoter with robust bidirectional activity.</text>
</comment>
<comment type="caution">
    <text evidence="2">Product of a dubious CDS prediction.</text>
</comment>
<reference key="1">
    <citation type="journal article" date="2004" name="Nature">
        <title>The DNA sequence and comparative analysis of human chromosome 10.</title>
        <authorList>
            <person name="Deloukas P."/>
            <person name="Earthrowl M.E."/>
            <person name="Grafham D.V."/>
            <person name="Rubenfield M."/>
            <person name="French L."/>
            <person name="Steward C.A."/>
            <person name="Sims S.K."/>
            <person name="Jones M.C."/>
            <person name="Searle S."/>
            <person name="Scott C."/>
            <person name="Howe K."/>
            <person name="Hunt S.E."/>
            <person name="Andrews T.D."/>
            <person name="Gilbert J.G.R."/>
            <person name="Swarbreck D."/>
            <person name="Ashurst J.L."/>
            <person name="Taylor A."/>
            <person name="Battles J."/>
            <person name="Bird C.P."/>
            <person name="Ainscough R."/>
            <person name="Almeida J.P."/>
            <person name="Ashwell R.I.S."/>
            <person name="Ambrose K.D."/>
            <person name="Babbage A.K."/>
            <person name="Bagguley C.L."/>
            <person name="Bailey J."/>
            <person name="Banerjee R."/>
            <person name="Bates K."/>
            <person name="Beasley H."/>
            <person name="Bray-Allen S."/>
            <person name="Brown A.J."/>
            <person name="Brown J.Y."/>
            <person name="Burford D.C."/>
            <person name="Burrill W."/>
            <person name="Burton J."/>
            <person name="Cahill P."/>
            <person name="Camire D."/>
            <person name="Carter N.P."/>
            <person name="Chapman J.C."/>
            <person name="Clark S.Y."/>
            <person name="Clarke G."/>
            <person name="Clee C.M."/>
            <person name="Clegg S."/>
            <person name="Corby N."/>
            <person name="Coulson A."/>
            <person name="Dhami P."/>
            <person name="Dutta I."/>
            <person name="Dunn M."/>
            <person name="Faulkner L."/>
            <person name="Frankish A."/>
            <person name="Frankland J.A."/>
            <person name="Garner P."/>
            <person name="Garnett J."/>
            <person name="Gribble S."/>
            <person name="Griffiths C."/>
            <person name="Grocock R."/>
            <person name="Gustafson E."/>
            <person name="Hammond S."/>
            <person name="Harley J.L."/>
            <person name="Hart E."/>
            <person name="Heath P.D."/>
            <person name="Ho T.P."/>
            <person name="Hopkins B."/>
            <person name="Horne J."/>
            <person name="Howden P.J."/>
            <person name="Huckle E."/>
            <person name="Hynds C."/>
            <person name="Johnson C."/>
            <person name="Johnson D."/>
            <person name="Kana A."/>
            <person name="Kay M."/>
            <person name="Kimberley A.M."/>
            <person name="Kershaw J.K."/>
            <person name="Kokkinaki M."/>
            <person name="Laird G.K."/>
            <person name="Lawlor S."/>
            <person name="Lee H.M."/>
            <person name="Leongamornlert D.A."/>
            <person name="Laird G."/>
            <person name="Lloyd C."/>
            <person name="Lloyd D.M."/>
            <person name="Loveland J."/>
            <person name="Lovell J."/>
            <person name="McLaren S."/>
            <person name="McLay K.E."/>
            <person name="McMurray A."/>
            <person name="Mashreghi-Mohammadi M."/>
            <person name="Matthews L."/>
            <person name="Milne S."/>
            <person name="Nickerson T."/>
            <person name="Nguyen M."/>
            <person name="Overton-Larty E."/>
            <person name="Palmer S.A."/>
            <person name="Pearce A.V."/>
            <person name="Peck A.I."/>
            <person name="Pelan S."/>
            <person name="Phillimore B."/>
            <person name="Porter K."/>
            <person name="Rice C.M."/>
            <person name="Rogosin A."/>
            <person name="Ross M.T."/>
            <person name="Sarafidou T."/>
            <person name="Sehra H.K."/>
            <person name="Shownkeen R."/>
            <person name="Skuce C.D."/>
            <person name="Smith M."/>
            <person name="Standring L."/>
            <person name="Sycamore N."/>
            <person name="Tester J."/>
            <person name="Thorpe A."/>
            <person name="Torcasso W."/>
            <person name="Tracey A."/>
            <person name="Tromans A."/>
            <person name="Tsolas J."/>
            <person name="Wall M."/>
            <person name="Walsh J."/>
            <person name="Wang H."/>
            <person name="Weinstock K."/>
            <person name="West A.P."/>
            <person name="Willey D.L."/>
            <person name="Whitehead S.L."/>
            <person name="Wilming L."/>
            <person name="Wray P.W."/>
            <person name="Young L."/>
            <person name="Chen Y."/>
            <person name="Lovering R.C."/>
            <person name="Moschonas N.K."/>
            <person name="Siebert R."/>
            <person name="Fechtel K."/>
            <person name="Bentley D."/>
            <person name="Durbin R.M."/>
            <person name="Hubbard T."/>
            <person name="Doucette-Stamm L."/>
            <person name="Beck S."/>
            <person name="Smith D.R."/>
            <person name="Rogers J."/>
        </authorList>
    </citation>
    <scope>NUCLEOTIDE SEQUENCE [LARGE SCALE GENOMIC DNA]</scope>
</reference>
<reference key="2">
    <citation type="journal article" date="2004" name="Genome Res.">
        <title>The status, quality, and expansion of the NIH full-length cDNA project: the Mammalian Gene Collection (MGC).</title>
        <authorList>
            <consortium name="The MGC Project Team"/>
        </authorList>
    </citation>
    <scope>NUCLEOTIDE SEQUENCE [LARGE SCALE MRNA]</scope>
    <source>
        <tissue>Brain</tissue>
    </source>
</reference>
<reference key="3">
    <citation type="journal article" date="2007" name="Gene">
        <title>A promoter with bidirectional activity is located between TLX1/HOX11 and a divergently transcribed novel human gene.</title>
        <authorList>
            <person name="Greene W.K."/>
            <person name="Sontani Y."/>
            <person name="Sharp M.A."/>
            <person name="Dunn D.S."/>
            <person name="Kees U.R."/>
            <person name="Bellgard M.I."/>
        </authorList>
    </citation>
    <scope>IDENTIFICATION</scope>
</reference>
<accession>P0CAT3</accession>
<feature type="chain" id="PRO_0000378336" description="Putative TLX1 neighbor protein">
    <location>
        <begin position="1"/>
        <end position="122"/>
    </location>
</feature>
<feature type="region of interest" description="Disordered" evidence="1">
    <location>
        <begin position="21"/>
        <end position="122"/>
    </location>
</feature>
<feature type="compositionally biased region" description="Gly residues" evidence="1">
    <location>
        <begin position="113"/>
        <end position="122"/>
    </location>
</feature>
<gene>
    <name type="primary">TLX1NB</name>
    <name type="synonym">TDI</name>
</gene>